<accession>Q9FVE0</accession>
<accession>Q9S7N4</accession>
<evidence type="ECO:0000250" key="1"/>
<evidence type="ECO:0000255" key="2"/>
<evidence type="ECO:0000256" key="3">
    <source>
        <dbReference type="SAM" id="MobiDB-lite"/>
    </source>
</evidence>
<evidence type="ECO:0000269" key="4">
    <source>
    </source>
</evidence>
<evidence type="ECO:0000305" key="5"/>
<dbReference type="EMBL" id="AC009325">
    <property type="protein sequence ID" value="AAF01553.1"/>
    <property type="molecule type" value="Genomic_DNA"/>
</dbReference>
<dbReference type="EMBL" id="AC010797">
    <property type="protein sequence ID" value="AAF03426.1"/>
    <property type="molecule type" value="Genomic_DNA"/>
</dbReference>
<dbReference type="EMBL" id="CP002686">
    <property type="protein sequence ID" value="AEE73704.1"/>
    <property type="molecule type" value="Genomic_DNA"/>
</dbReference>
<dbReference type="EMBL" id="AK118478">
    <property type="protein sequence ID" value="BAC43082.1"/>
    <property type="molecule type" value="mRNA"/>
</dbReference>
<dbReference type="EMBL" id="BT004733">
    <property type="protein sequence ID" value="AAO42979.1"/>
    <property type="molecule type" value="mRNA"/>
</dbReference>
<dbReference type="EMBL" id="AF195892">
    <property type="protein sequence ID" value="AAG24279.1"/>
    <property type="molecule type" value="mRNA"/>
</dbReference>
<dbReference type="RefSeq" id="NP_566146.1">
    <property type="nucleotide sequence ID" value="NM_111036.3"/>
</dbReference>
<dbReference type="STRING" id="3702.Q9FVE0"/>
<dbReference type="GlyGen" id="Q9FVE0">
    <property type="glycosylation" value="3 sites"/>
</dbReference>
<dbReference type="iPTMnet" id="Q9FVE0"/>
<dbReference type="PaxDb" id="3702-AT3G01700.1"/>
<dbReference type="EnsemblPlants" id="AT3G01700.1">
    <property type="protein sequence ID" value="AT3G01700.1"/>
    <property type="gene ID" value="AT3G01700"/>
</dbReference>
<dbReference type="GeneID" id="821093"/>
<dbReference type="Gramene" id="AT3G01700.1">
    <property type="protein sequence ID" value="AT3G01700.1"/>
    <property type="gene ID" value="AT3G01700"/>
</dbReference>
<dbReference type="KEGG" id="ath:AT3G01700"/>
<dbReference type="Araport" id="AT3G01700"/>
<dbReference type="TAIR" id="AT3G01700">
    <property type="gene designation" value="AGP11"/>
</dbReference>
<dbReference type="eggNOG" id="ENOG502SDBC">
    <property type="taxonomic scope" value="Eukaryota"/>
</dbReference>
<dbReference type="HOGENOM" id="CLU_1878253_0_0_1"/>
<dbReference type="InParanoid" id="Q9FVE0"/>
<dbReference type="OMA" id="MARQAFF"/>
<dbReference type="PRO" id="PR:Q9FVE0"/>
<dbReference type="Proteomes" id="UP000006548">
    <property type="component" value="Chromosome 3"/>
</dbReference>
<dbReference type="ExpressionAtlas" id="Q9FVE0">
    <property type="expression patterns" value="baseline and differential"/>
</dbReference>
<dbReference type="GO" id="GO:0005886">
    <property type="term" value="C:plasma membrane"/>
    <property type="evidence" value="ECO:0007669"/>
    <property type="project" value="UniProtKB-SubCell"/>
</dbReference>
<dbReference type="GO" id="GO:0098552">
    <property type="term" value="C:side of membrane"/>
    <property type="evidence" value="ECO:0007669"/>
    <property type="project" value="UniProtKB-KW"/>
</dbReference>
<dbReference type="GO" id="GO:0009860">
    <property type="term" value="P:pollen tube growth"/>
    <property type="evidence" value="ECO:0000315"/>
    <property type="project" value="TAIR"/>
</dbReference>
<dbReference type="InterPro" id="IPR044959">
    <property type="entry name" value="AGP"/>
</dbReference>
<dbReference type="PANTHER" id="PTHR36321:SF21">
    <property type="entry name" value="CLASSICAL ARABINOGALACTAN PROTEIN 11"/>
    <property type="match status" value="1"/>
</dbReference>
<dbReference type="PANTHER" id="PTHR36321">
    <property type="entry name" value="CLASSICAL ARABINOGALACTAN PROTEIN 9"/>
    <property type="match status" value="1"/>
</dbReference>
<keyword id="KW-1003">Cell membrane</keyword>
<keyword id="KW-0325">Glycoprotein</keyword>
<keyword id="KW-0336">GPI-anchor</keyword>
<keyword id="KW-0449">Lipoprotein</keyword>
<keyword id="KW-0472">Membrane</keyword>
<keyword id="KW-0654">Proteoglycan</keyword>
<keyword id="KW-1185">Reference proteome</keyword>
<keyword id="KW-0732">Signal</keyword>
<sequence length="136" mass="12992">MARLFVVVALLALAVGTVFAADAPSAAPTASPTKSPTKAPAAAPKSSAAAPKASSPVAEEPTPEDDYSAASPSDSAEAPTVSSPPAPTPEADGPSSDGPSSDGPAAAESPKSGATTNVKLSIAGTVAAAGFFIFSL</sequence>
<name>AGP11_ARATH</name>
<comment type="function">
    <text>Proteoglycan that seems to be implicated in diverse developmental roles such as differentiation, cell-cell recognition, embryogenesis and programmed cell death.</text>
</comment>
<comment type="subcellular location">
    <subcellularLocation>
        <location evidence="5">Cell membrane</location>
        <topology evidence="5">Lipid-anchor</topology>
        <topology evidence="5">GPI-anchor</topology>
    </subcellularLocation>
</comment>
<comment type="induction">
    <text evidence="4">Up-regulated by AHL16/TEK.</text>
</comment>
<comment type="PTM">
    <text evidence="1">O-glycosylated on the hydroxyproline residues.</text>
</comment>
<comment type="similarity">
    <text evidence="5">Belongs to the classical AGP family.</text>
</comment>
<gene>
    <name type="primary">AGP11</name>
    <name type="ordered locus">At3g01700</name>
    <name type="ORF">F28J7.2</name>
    <name type="ORF">F4P13.24</name>
</gene>
<feature type="signal peptide" evidence="2">
    <location>
        <begin position="1"/>
        <end position="20"/>
    </location>
</feature>
<feature type="chain" id="PRO_0000269003" description="Classical arabinogalactan protein 11">
    <location>
        <begin position="21"/>
        <end position="112"/>
    </location>
</feature>
<feature type="propeptide" id="PRO_0000269004" description="Removed in mature form" evidence="2">
    <location>
        <begin position="113"/>
        <end position="136"/>
    </location>
</feature>
<feature type="region of interest" description="Disordered" evidence="3">
    <location>
        <begin position="24"/>
        <end position="115"/>
    </location>
</feature>
<feature type="compositionally biased region" description="Low complexity" evidence="3">
    <location>
        <begin position="24"/>
        <end position="56"/>
    </location>
</feature>
<feature type="compositionally biased region" description="Low complexity" evidence="3">
    <location>
        <begin position="68"/>
        <end position="81"/>
    </location>
</feature>
<feature type="compositionally biased region" description="Low complexity" evidence="3">
    <location>
        <begin position="89"/>
        <end position="107"/>
    </location>
</feature>
<feature type="lipid moiety-binding region" description="GPI-anchor amidated serine" evidence="2">
    <location>
        <position position="112"/>
    </location>
</feature>
<feature type="sequence conflict" description="In Ref. 5; AAG24279." evidence="5" ref="5">
    <original>A</original>
    <variation>V</variation>
    <location>
        <position position="42"/>
    </location>
</feature>
<organism>
    <name type="scientific">Arabidopsis thaliana</name>
    <name type="common">Mouse-ear cress</name>
    <dbReference type="NCBI Taxonomy" id="3702"/>
    <lineage>
        <taxon>Eukaryota</taxon>
        <taxon>Viridiplantae</taxon>
        <taxon>Streptophyta</taxon>
        <taxon>Embryophyta</taxon>
        <taxon>Tracheophyta</taxon>
        <taxon>Spermatophyta</taxon>
        <taxon>Magnoliopsida</taxon>
        <taxon>eudicotyledons</taxon>
        <taxon>Gunneridae</taxon>
        <taxon>Pentapetalae</taxon>
        <taxon>rosids</taxon>
        <taxon>malvids</taxon>
        <taxon>Brassicales</taxon>
        <taxon>Brassicaceae</taxon>
        <taxon>Camelineae</taxon>
        <taxon>Arabidopsis</taxon>
    </lineage>
</organism>
<proteinExistence type="evidence at transcript level"/>
<protein>
    <recommendedName>
        <fullName>Classical arabinogalactan protein 11</fullName>
    </recommendedName>
</protein>
<reference key="1">
    <citation type="journal article" date="2000" name="Nature">
        <title>Sequence and analysis of chromosome 3 of the plant Arabidopsis thaliana.</title>
        <authorList>
            <person name="Salanoubat M."/>
            <person name="Lemcke K."/>
            <person name="Rieger M."/>
            <person name="Ansorge W."/>
            <person name="Unseld M."/>
            <person name="Fartmann B."/>
            <person name="Valle G."/>
            <person name="Bloecker H."/>
            <person name="Perez-Alonso M."/>
            <person name="Obermaier B."/>
            <person name="Delseny M."/>
            <person name="Boutry M."/>
            <person name="Grivell L.A."/>
            <person name="Mache R."/>
            <person name="Puigdomenech P."/>
            <person name="De Simone V."/>
            <person name="Choisne N."/>
            <person name="Artiguenave F."/>
            <person name="Robert C."/>
            <person name="Brottier P."/>
            <person name="Wincker P."/>
            <person name="Cattolico L."/>
            <person name="Weissenbach J."/>
            <person name="Saurin W."/>
            <person name="Quetier F."/>
            <person name="Schaefer M."/>
            <person name="Mueller-Auer S."/>
            <person name="Gabel C."/>
            <person name="Fuchs M."/>
            <person name="Benes V."/>
            <person name="Wurmbach E."/>
            <person name="Drzonek H."/>
            <person name="Erfle H."/>
            <person name="Jordan N."/>
            <person name="Bangert S."/>
            <person name="Wiedelmann R."/>
            <person name="Kranz H."/>
            <person name="Voss H."/>
            <person name="Holland R."/>
            <person name="Brandt P."/>
            <person name="Nyakatura G."/>
            <person name="Vezzi A."/>
            <person name="D'Angelo M."/>
            <person name="Pallavicini A."/>
            <person name="Toppo S."/>
            <person name="Simionati B."/>
            <person name="Conrad A."/>
            <person name="Hornischer K."/>
            <person name="Kauer G."/>
            <person name="Loehnert T.-H."/>
            <person name="Nordsiek G."/>
            <person name="Reichelt J."/>
            <person name="Scharfe M."/>
            <person name="Schoen O."/>
            <person name="Bargues M."/>
            <person name="Terol J."/>
            <person name="Climent J."/>
            <person name="Navarro P."/>
            <person name="Collado C."/>
            <person name="Perez-Perez A."/>
            <person name="Ottenwaelder B."/>
            <person name="Duchemin D."/>
            <person name="Cooke R."/>
            <person name="Laudie M."/>
            <person name="Berger-Llauro C."/>
            <person name="Purnelle B."/>
            <person name="Masuy D."/>
            <person name="de Haan M."/>
            <person name="Maarse A.C."/>
            <person name="Alcaraz J.-P."/>
            <person name="Cottet A."/>
            <person name="Casacuberta E."/>
            <person name="Monfort A."/>
            <person name="Argiriou A."/>
            <person name="Flores M."/>
            <person name="Liguori R."/>
            <person name="Vitale D."/>
            <person name="Mannhaupt G."/>
            <person name="Haase D."/>
            <person name="Schoof H."/>
            <person name="Rudd S."/>
            <person name="Zaccaria P."/>
            <person name="Mewes H.-W."/>
            <person name="Mayer K.F.X."/>
            <person name="Kaul S."/>
            <person name="Town C.D."/>
            <person name="Koo H.L."/>
            <person name="Tallon L.J."/>
            <person name="Jenkins J."/>
            <person name="Rooney T."/>
            <person name="Rizzo M."/>
            <person name="Walts A."/>
            <person name="Utterback T."/>
            <person name="Fujii C.Y."/>
            <person name="Shea T.P."/>
            <person name="Creasy T.H."/>
            <person name="Haas B."/>
            <person name="Maiti R."/>
            <person name="Wu D."/>
            <person name="Peterson J."/>
            <person name="Van Aken S."/>
            <person name="Pai G."/>
            <person name="Militscher J."/>
            <person name="Sellers P."/>
            <person name="Gill J.E."/>
            <person name="Feldblyum T.V."/>
            <person name="Preuss D."/>
            <person name="Lin X."/>
            <person name="Nierman W.C."/>
            <person name="Salzberg S.L."/>
            <person name="White O."/>
            <person name="Venter J.C."/>
            <person name="Fraser C.M."/>
            <person name="Kaneko T."/>
            <person name="Nakamura Y."/>
            <person name="Sato S."/>
            <person name="Kato T."/>
            <person name="Asamizu E."/>
            <person name="Sasamoto S."/>
            <person name="Kimura T."/>
            <person name="Idesawa K."/>
            <person name="Kawashima K."/>
            <person name="Kishida Y."/>
            <person name="Kiyokawa C."/>
            <person name="Kohara M."/>
            <person name="Matsumoto M."/>
            <person name="Matsuno A."/>
            <person name="Muraki A."/>
            <person name="Nakayama S."/>
            <person name="Nakazaki N."/>
            <person name="Shinpo S."/>
            <person name="Takeuchi C."/>
            <person name="Wada T."/>
            <person name="Watanabe A."/>
            <person name="Yamada M."/>
            <person name="Yasuda M."/>
            <person name="Tabata S."/>
        </authorList>
    </citation>
    <scope>NUCLEOTIDE SEQUENCE [LARGE SCALE GENOMIC DNA]</scope>
    <source>
        <strain>cv. Columbia</strain>
    </source>
</reference>
<reference key="2">
    <citation type="journal article" date="2017" name="Plant J.">
        <title>Araport11: a complete reannotation of the Arabidopsis thaliana reference genome.</title>
        <authorList>
            <person name="Cheng C.Y."/>
            <person name="Krishnakumar V."/>
            <person name="Chan A.P."/>
            <person name="Thibaud-Nissen F."/>
            <person name="Schobel S."/>
            <person name="Town C.D."/>
        </authorList>
    </citation>
    <scope>GENOME REANNOTATION</scope>
    <source>
        <strain>cv. Columbia</strain>
    </source>
</reference>
<reference key="3">
    <citation type="journal article" date="2002" name="Science">
        <title>Functional annotation of a full-length Arabidopsis cDNA collection.</title>
        <authorList>
            <person name="Seki M."/>
            <person name="Narusaka M."/>
            <person name="Kamiya A."/>
            <person name="Ishida J."/>
            <person name="Satou M."/>
            <person name="Sakurai T."/>
            <person name="Nakajima M."/>
            <person name="Enju A."/>
            <person name="Akiyama K."/>
            <person name="Oono Y."/>
            <person name="Muramatsu M."/>
            <person name="Hayashizaki Y."/>
            <person name="Kawai J."/>
            <person name="Carninci P."/>
            <person name="Itoh M."/>
            <person name="Ishii Y."/>
            <person name="Arakawa T."/>
            <person name="Shibata K."/>
            <person name="Shinagawa A."/>
            <person name="Shinozaki K."/>
        </authorList>
    </citation>
    <scope>NUCLEOTIDE SEQUENCE [LARGE SCALE MRNA]</scope>
    <source>
        <strain>cv. Columbia</strain>
    </source>
</reference>
<reference key="4">
    <citation type="journal article" date="2003" name="Science">
        <title>Empirical analysis of transcriptional activity in the Arabidopsis genome.</title>
        <authorList>
            <person name="Yamada K."/>
            <person name="Lim J."/>
            <person name="Dale J.M."/>
            <person name="Chen H."/>
            <person name="Shinn P."/>
            <person name="Palm C.J."/>
            <person name="Southwick A.M."/>
            <person name="Wu H.C."/>
            <person name="Kim C.J."/>
            <person name="Nguyen M."/>
            <person name="Pham P.K."/>
            <person name="Cheuk R.F."/>
            <person name="Karlin-Newmann G."/>
            <person name="Liu S.X."/>
            <person name="Lam B."/>
            <person name="Sakano H."/>
            <person name="Wu T."/>
            <person name="Yu G."/>
            <person name="Miranda M."/>
            <person name="Quach H.L."/>
            <person name="Tripp M."/>
            <person name="Chang C.H."/>
            <person name="Lee J.M."/>
            <person name="Toriumi M.J."/>
            <person name="Chan M.M."/>
            <person name="Tang C.C."/>
            <person name="Onodera C.S."/>
            <person name="Deng J.M."/>
            <person name="Akiyama K."/>
            <person name="Ansari Y."/>
            <person name="Arakawa T."/>
            <person name="Banh J."/>
            <person name="Banno F."/>
            <person name="Bowser L."/>
            <person name="Brooks S.Y."/>
            <person name="Carninci P."/>
            <person name="Chao Q."/>
            <person name="Choy N."/>
            <person name="Enju A."/>
            <person name="Goldsmith A.D."/>
            <person name="Gurjal M."/>
            <person name="Hansen N.F."/>
            <person name="Hayashizaki Y."/>
            <person name="Johnson-Hopson C."/>
            <person name="Hsuan V.W."/>
            <person name="Iida K."/>
            <person name="Karnes M."/>
            <person name="Khan S."/>
            <person name="Koesema E."/>
            <person name="Ishida J."/>
            <person name="Jiang P.X."/>
            <person name="Jones T."/>
            <person name="Kawai J."/>
            <person name="Kamiya A."/>
            <person name="Meyers C."/>
            <person name="Nakajima M."/>
            <person name="Narusaka M."/>
            <person name="Seki M."/>
            <person name="Sakurai T."/>
            <person name="Satou M."/>
            <person name="Tamse R."/>
            <person name="Vaysberg M."/>
            <person name="Wallender E.K."/>
            <person name="Wong C."/>
            <person name="Yamamura Y."/>
            <person name="Yuan S."/>
            <person name="Shinozaki K."/>
            <person name="Davis R.W."/>
            <person name="Theologis A."/>
            <person name="Ecker J.R."/>
        </authorList>
    </citation>
    <scope>NUCLEOTIDE SEQUENCE [LARGE SCALE MRNA]</scope>
    <source>
        <strain>cv. Columbia</strain>
    </source>
</reference>
<reference key="5">
    <citation type="journal article" date="2000" name="Plant Cell">
        <title>The classical arabinogalactan protein gene family of Arabidopsis.</title>
        <authorList>
            <person name="Schultz C.J."/>
            <person name="Johnson K.L."/>
            <person name="Currie G."/>
            <person name="Bacic A."/>
        </authorList>
    </citation>
    <scope>NUCLEOTIDE SEQUENCE [MRNA] OF 2-136</scope>
    <source>
        <strain>cv. Columbia</strain>
    </source>
</reference>
<reference key="6">
    <citation type="journal article" date="2002" name="Plant Physiol.">
        <title>Using genomic resources to guide research directions. The arabinogalactan protein gene family as a test case.</title>
        <authorList>
            <person name="Schultz C.J."/>
            <person name="Rumsewicz M.P."/>
            <person name="Johnson K.L."/>
            <person name="Jones B.J."/>
            <person name="Gaspar Y.M."/>
            <person name="Bacic A."/>
        </authorList>
    </citation>
    <scope>GENE FAMILY</scope>
    <scope>NOMENCLATURE</scope>
</reference>
<reference key="7">
    <citation type="journal article" date="2014" name="Mol. Plant">
        <title>Arabidopsis AT-hook protein TEK positively regulates the expression of arabinogalactan proteins in controlling nexine layer formation in the pollen wall.</title>
        <authorList>
            <person name="Jia Q.S."/>
            <person name="Zhu J."/>
            <person name="Xu X.F."/>
            <person name="Lou Y."/>
            <person name="Zhang Z.L."/>
            <person name="Zhang Z.P."/>
            <person name="Yang Z.N."/>
        </authorList>
    </citation>
    <scope>INDUCTION</scope>
</reference>